<sequence>MADQQEKDQKLKKQQRSNATIAFACLSFFVCMIGAAYASVPLYRIFCQVTGYGGTTQRVEQYSDTILDKTIKVRFDANTANGLAWDFKPVQREVTVRIGETTMIKYEARNLFDQPTYGRASFNVAPGRAGAYFNKVECFCFTDTTLQPGEDMEMPVVFFVDPEIVNDPDLKDVKTITLSYTFFPIEKPKPVANVKAETPTNGS</sequence>
<comment type="function">
    <text evidence="1">Exerts its effect at some terminal stage of cytochrome c oxidase synthesis, probably by being involved in the insertion of the copper B into subunit I.</text>
</comment>
<comment type="subcellular location">
    <subcellularLocation>
        <location evidence="1">Cell inner membrane</location>
        <topology evidence="1">Single-pass type II membrane protein</topology>
        <orientation evidence="1">Periplasmic side</orientation>
    </subcellularLocation>
</comment>
<comment type="similarity">
    <text evidence="1">Belongs to the COX11/CtaG family.</text>
</comment>
<protein>
    <recommendedName>
        <fullName evidence="1">Cytochrome c oxidase assembly protein CtaG</fullName>
    </recommendedName>
</protein>
<evidence type="ECO:0000255" key="1">
    <source>
        <dbReference type="HAMAP-Rule" id="MF_00155"/>
    </source>
</evidence>
<name>COXZ_BRUA4</name>
<reference key="1">
    <citation type="journal article" date="2011" name="J. Bacteriol.">
        <title>Genome of Ochrobactrum anthropi ATCC 49188 T, a versatile opportunistic pathogen and symbiont of several eukaryotic hosts.</title>
        <authorList>
            <person name="Chain P.S."/>
            <person name="Lang D.M."/>
            <person name="Comerci D.J."/>
            <person name="Malfatti S.A."/>
            <person name="Vergez L.M."/>
            <person name="Shin M."/>
            <person name="Ugalde R.A."/>
            <person name="Garcia E."/>
            <person name="Tolmasky M.E."/>
        </authorList>
    </citation>
    <scope>NUCLEOTIDE SEQUENCE [LARGE SCALE GENOMIC DNA]</scope>
    <source>
        <strain>ATCC 49188 / DSM 6882 / CCUG 24695 / JCM 21032 / LMG 3331 / NBRC 15819 / NCTC 12168 / Alc 37</strain>
    </source>
</reference>
<keyword id="KW-0997">Cell inner membrane</keyword>
<keyword id="KW-1003">Cell membrane</keyword>
<keyword id="KW-0186">Copper</keyword>
<keyword id="KW-0472">Membrane</keyword>
<keyword id="KW-1185">Reference proteome</keyword>
<keyword id="KW-0735">Signal-anchor</keyword>
<keyword id="KW-0812">Transmembrane</keyword>
<keyword id="KW-1133">Transmembrane helix</keyword>
<dbReference type="EMBL" id="CP000758">
    <property type="protein sequence ID" value="ABS13316.1"/>
    <property type="molecule type" value="Genomic_DNA"/>
</dbReference>
<dbReference type="RefSeq" id="WP_012090849.1">
    <property type="nucleotide sequence ID" value="NC_009667.1"/>
</dbReference>
<dbReference type="SMR" id="A6WWG2"/>
<dbReference type="STRING" id="439375.Oant_0585"/>
<dbReference type="KEGG" id="oan:Oant_0585"/>
<dbReference type="PATRIC" id="fig|439375.7.peg.625"/>
<dbReference type="eggNOG" id="COG3175">
    <property type="taxonomic scope" value="Bacteria"/>
</dbReference>
<dbReference type="HOGENOM" id="CLU_045000_5_0_5"/>
<dbReference type="PhylomeDB" id="A6WWG2"/>
<dbReference type="Proteomes" id="UP000002301">
    <property type="component" value="Chromosome 1"/>
</dbReference>
<dbReference type="GO" id="GO:0005886">
    <property type="term" value="C:plasma membrane"/>
    <property type="evidence" value="ECO:0007669"/>
    <property type="project" value="UniProtKB-SubCell"/>
</dbReference>
<dbReference type="GO" id="GO:0005507">
    <property type="term" value="F:copper ion binding"/>
    <property type="evidence" value="ECO:0007669"/>
    <property type="project" value="InterPro"/>
</dbReference>
<dbReference type="GO" id="GO:0008535">
    <property type="term" value="P:respiratory chain complex IV assembly"/>
    <property type="evidence" value="ECO:0007669"/>
    <property type="project" value="UniProtKB-UniRule"/>
</dbReference>
<dbReference type="FunFam" id="2.60.370.10:FF:000001">
    <property type="entry name" value="COX11 cytochrome c oxidase assembly homolog"/>
    <property type="match status" value="1"/>
</dbReference>
<dbReference type="Gene3D" id="2.60.370.10">
    <property type="entry name" value="Ctag/Cox11"/>
    <property type="match status" value="1"/>
</dbReference>
<dbReference type="HAMAP" id="MF_00155">
    <property type="entry name" value="CtaG"/>
    <property type="match status" value="1"/>
</dbReference>
<dbReference type="InterPro" id="IPR023471">
    <property type="entry name" value="CtaG/Cox11_dom_sf"/>
</dbReference>
<dbReference type="InterPro" id="IPR007533">
    <property type="entry name" value="Cyt_c_oxidase_assmbl_CtaG"/>
</dbReference>
<dbReference type="NCBIfam" id="NF003465">
    <property type="entry name" value="PRK05089.1"/>
    <property type="match status" value="1"/>
</dbReference>
<dbReference type="PANTHER" id="PTHR21320:SF3">
    <property type="entry name" value="CYTOCHROME C OXIDASE ASSEMBLY PROTEIN COX11, MITOCHONDRIAL-RELATED"/>
    <property type="match status" value="1"/>
</dbReference>
<dbReference type="PANTHER" id="PTHR21320">
    <property type="entry name" value="CYTOCHROME C OXIDASE ASSEMBLY PROTEIN COX11-RELATED"/>
    <property type="match status" value="1"/>
</dbReference>
<dbReference type="Pfam" id="PF04442">
    <property type="entry name" value="CtaG_Cox11"/>
    <property type="match status" value="1"/>
</dbReference>
<dbReference type="PIRSF" id="PIRSF005413">
    <property type="entry name" value="COX11"/>
    <property type="match status" value="1"/>
</dbReference>
<dbReference type="SUPFAM" id="SSF110111">
    <property type="entry name" value="Ctag/Cox11"/>
    <property type="match status" value="1"/>
</dbReference>
<accession>A6WWG2</accession>
<organism>
    <name type="scientific">Brucella anthropi (strain ATCC 49188 / DSM 6882 / CCUG 24695 / JCM 21032 / LMG 3331 / NBRC 15819 / NCTC 12168 / Alc 37)</name>
    <name type="common">Ochrobactrum anthropi</name>
    <dbReference type="NCBI Taxonomy" id="439375"/>
    <lineage>
        <taxon>Bacteria</taxon>
        <taxon>Pseudomonadati</taxon>
        <taxon>Pseudomonadota</taxon>
        <taxon>Alphaproteobacteria</taxon>
        <taxon>Hyphomicrobiales</taxon>
        <taxon>Brucellaceae</taxon>
        <taxon>Brucella/Ochrobactrum group</taxon>
        <taxon>Brucella</taxon>
    </lineage>
</organism>
<proteinExistence type="inferred from homology"/>
<gene>
    <name evidence="1" type="primary">ctaG</name>
    <name type="ordered locus">Oant_0585</name>
</gene>
<feature type="chain" id="PRO_0000311202" description="Cytochrome c oxidase assembly protein CtaG">
    <location>
        <begin position="1"/>
        <end position="203"/>
    </location>
</feature>
<feature type="topological domain" description="Cytoplasmic" evidence="1">
    <location>
        <begin position="1"/>
        <end position="16"/>
    </location>
</feature>
<feature type="transmembrane region" description="Helical; Signal-anchor for type II membrane protein" evidence="1">
    <location>
        <begin position="17"/>
        <end position="39"/>
    </location>
</feature>
<feature type="topological domain" description="Periplasmic" evidence="1">
    <location>
        <begin position="40"/>
        <end position="203"/>
    </location>
</feature>